<proteinExistence type="inferred from homology"/>
<reference key="1">
    <citation type="journal article" date="2008" name="DNA Res.">
        <title>Complete genome sequence and comparative analysis of the wild-type commensal Escherichia coli strain SE11 isolated from a healthy adult.</title>
        <authorList>
            <person name="Oshima K."/>
            <person name="Toh H."/>
            <person name="Ogura Y."/>
            <person name="Sasamoto H."/>
            <person name="Morita H."/>
            <person name="Park S.-H."/>
            <person name="Ooka T."/>
            <person name="Iyoda S."/>
            <person name="Taylor T.D."/>
            <person name="Hayashi T."/>
            <person name="Itoh K."/>
            <person name="Hattori M."/>
        </authorList>
    </citation>
    <scope>NUCLEOTIDE SEQUENCE [LARGE SCALE GENOMIC DNA]</scope>
    <source>
        <strain>SE11</strain>
    </source>
</reference>
<dbReference type="EMBL" id="AP009240">
    <property type="protein sequence ID" value="BAG79622.1"/>
    <property type="molecule type" value="Genomic_DNA"/>
</dbReference>
<dbReference type="RefSeq" id="WP_000130691.1">
    <property type="nucleotide sequence ID" value="NC_011415.1"/>
</dbReference>
<dbReference type="SMR" id="B6I4F2"/>
<dbReference type="GeneID" id="75059707"/>
<dbReference type="KEGG" id="ecy:ECSE_4098"/>
<dbReference type="HOGENOM" id="CLU_027562_9_0_6"/>
<dbReference type="Proteomes" id="UP000008199">
    <property type="component" value="Chromosome"/>
</dbReference>
<dbReference type="GO" id="GO:0005737">
    <property type="term" value="C:cytoplasm"/>
    <property type="evidence" value="ECO:0007669"/>
    <property type="project" value="UniProtKB-SubCell"/>
</dbReference>
<dbReference type="GO" id="GO:0003677">
    <property type="term" value="F:DNA binding"/>
    <property type="evidence" value="ECO:0007669"/>
    <property type="project" value="UniProtKB-KW"/>
</dbReference>
<dbReference type="GO" id="GO:0009037">
    <property type="term" value="F:tyrosine-based site-specific recombinase activity"/>
    <property type="evidence" value="ECO:0007669"/>
    <property type="project" value="UniProtKB-UniRule"/>
</dbReference>
<dbReference type="GO" id="GO:0051301">
    <property type="term" value="P:cell division"/>
    <property type="evidence" value="ECO:0007669"/>
    <property type="project" value="UniProtKB-KW"/>
</dbReference>
<dbReference type="GO" id="GO:0007059">
    <property type="term" value="P:chromosome segregation"/>
    <property type="evidence" value="ECO:0007669"/>
    <property type="project" value="UniProtKB-UniRule"/>
</dbReference>
<dbReference type="GO" id="GO:0006313">
    <property type="term" value="P:DNA transposition"/>
    <property type="evidence" value="ECO:0007669"/>
    <property type="project" value="UniProtKB-UniRule"/>
</dbReference>
<dbReference type="CDD" id="cd00798">
    <property type="entry name" value="INT_XerDC_C"/>
    <property type="match status" value="1"/>
</dbReference>
<dbReference type="FunFam" id="1.10.443.10:FF:000002">
    <property type="entry name" value="Tyrosine recombinase XerC"/>
    <property type="match status" value="1"/>
</dbReference>
<dbReference type="Gene3D" id="1.10.150.130">
    <property type="match status" value="1"/>
</dbReference>
<dbReference type="Gene3D" id="1.10.443.10">
    <property type="entry name" value="Intergrase catalytic core"/>
    <property type="match status" value="1"/>
</dbReference>
<dbReference type="HAMAP" id="MF_01808">
    <property type="entry name" value="Recomb_XerC_XerD"/>
    <property type="match status" value="1"/>
</dbReference>
<dbReference type="InterPro" id="IPR044068">
    <property type="entry name" value="CB"/>
</dbReference>
<dbReference type="InterPro" id="IPR011010">
    <property type="entry name" value="DNA_brk_join_enz"/>
</dbReference>
<dbReference type="InterPro" id="IPR013762">
    <property type="entry name" value="Integrase-like_cat_sf"/>
</dbReference>
<dbReference type="InterPro" id="IPR002104">
    <property type="entry name" value="Integrase_catalytic"/>
</dbReference>
<dbReference type="InterPro" id="IPR010998">
    <property type="entry name" value="Integrase_recombinase_N"/>
</dbReference>
<dbReference type="InterPro" id="IPR004107">
    <property type="entry name" value="Integrase_SAM-like_N"/>
</dbReference>
<dbReference type="InterPro" id="IPR011931">
    <property type="entry name" value="Recomb_XerC"/>
</dbReference>
<dbReference type="InterPro" id="IPR023009">
    <property type="entry name" value="Tyrosine_recombinase_XerC/XerD"/>
</dbReference>
<dbReference type="InterPro" id="IPR050090">
    <property type="entry name" value="Tyrosine_recombinase_XerCD"/>
</dbReference>
<dbReference type="NCBIfam" id="NF001399">
    <property type="entry name" value="PRK00283.1"/>
    <property type="match status" value="1"/>
</dbReference>
<dbReference type="NCBIfam" id="TIGR02224">
    <property type="entry name" value="recomb_XerC"/>
    <property type="match status" value="1"/>
</dbReference>
<dbReference type="PANTHER" id="PTHR30349">
    <property type="entry name" value="PHAGE INTEGRASE-RELATED"/>
    <property type="match status" value="1"/>
</dbReference>
<dbReference type="PANTHER" id="PTHR30349:SF81">
    <property type="entry name" value="TYROSINE RECOMBINASE XERC"/>
    <property type="match status" value="1"/>
</dbReference>
<dbReference type="Pfam" id="PF02899">
    <property type="entry name" value="Phage_int_SAM_1"/>
    <property type="match status" value="1"/>
</dbReference>
<dbReference type="Pfam" id="PF00589">
    <property type="entry name" value="Phage_integrase"/>
    <property type="match status" value="1"/>
</dbReference>
<dbReference type="SUPFAM" id="SSF56349">
    <property type="entry name" value="DNA breaking-rejoining enzymes"/>
    <property type="match status" value="1"/>
</dbReference>
<dbReference type="SUPFAM" id="SSF47823">
    <property type="entry name" value="lambda integrase-like, N-terminal domain"/>
    <property type="match status" value="1"/>
</dbReference>
<dbReference type="PROSITE" id="PS51900">
    <property type="entry name" value="CB"/>
    <property type="match status" value="1"/>
</dbReference>
<dbReference type="PROSITE" id="PS51898">
    <property type="entry name" value="TYR_RECOMBINASE"/>
    <property type="match status" value="1"/>
</dbReference>
<name>XERC_ECOSE</name>
<gene>
    <name evidence="1" type="primary">xerC</name>
    <name type="ordered locus">ECSE_4098</name>
</gene>
<sequence>MTDLHTDVERYLRYLSVERQLSPITLLNYQRQLEAIINFASENGLQSWQQCDVTMVRNFAVRSRRKGLGAASLALRLSALRSFFDWLVSQNELKANPAKGVSAPKAPRHLPKNIDVDDMNRLLDIDINDPLAVRDRAMLEVMYGAGLRLSELVGLDIKHLDLESGEVWVMGKGSKERRLPIGRNAVAWIEHWLDLRDLFGSEDDALFLSKLGKRISARNVQKRFAEWGIKQGLNNHVHPHKLRHSFATHMLESSGDLRGVQELLGHANLSTTQIYTHLDFQHLASVYDAAHPRAKRGK</sequence>
<organism>
    <name type="scientific">Escherichia coli (strain SE11)</name>
    <dbReference type="NCBI Taxonomy" id="409438"/>
    <lineage>
        <taxon>Bacteria</taxon>
        <taxon>Pseudomonadati</taxon>
        <taxon>Pseudomonadota</taxon>
        <taxon>Gammaproteobacteria</taxon>
        <taxon>Enterobacterales</taxon>
        <taxon>Enterobacteriaceae</taxon>
        <taxon>Escherichia</taxon>
    </lineage>
</organism>
<evidence type="ECO:0000255" key="1">
    <source>
        <dbReference type="HAMAP-Rule" id="MF_01808"/>
    </source>
</evidence>
<evidence type="ECO:0000255" key="2">
    <source>
        <dbReference type="PROSITE-ProRule" id="PRU01246"/>
    </source>
</evidence>
<evidence type="ECO:0000255" key="3">
    <source>
        <dbReference type="PROSITE-ProRule" id="PRU01248"/>
    </source>
</evidence>
<feature type="chain" id="PRO_1000187596" description="Tyrosine recombinase XerC">
    <location>
        <begin position="1"/>
        <end position="298"/>
    </location>
</feature>
<feature type="domain" description="Core-binding (CB)" evidence="3">
    <location>
        <begin position="2"/>
        <end position="88"/>
    </location>
</feature>
<feature type="domain" description="Tyr recombinase" evidence="2">
    <location>
        <begin position="109"/>
        <end position="288"/>
    </location>
</feature>
<feature type="active site" evidence="1">
    <location>
        <position position="148"/>
    </location>
</feature>
<feature type="active site" evidence="1">
    <location>
        <position position="172"/>
    </location>
</feature>
<feature type="active site" evidence="1">
    <location>
        <position position="240"/>
    </location>
</feature>
<feature type="active site" evidence="1">
    <location>
        <position position="243"/>
    </location>
</feature>
<feature type="active site" evidence="1">
    <location>
        <position position="266"/>
    </location>
</feature>
<feature type="active site" description="O-(3'-phospho-DNA)-tyrosine intermediate" evidence="1">
    <location>
        <position position="275"/>
    </location>
</feature>
<accession>B6I4F2</accession>
<protein>
    <recommendedName>
        <fullName evidence="1">Tyrosine recombinase XerC</fullName>
    </recommendedName>
</protein>
<keyword id="KW-0131">Cell cycle</keyword>
<keyword id="KW-0132">Cell division</keyword>
<keyword id="KW-0159">Chromosome partition</keyword>
<keyword id="KW-0963">Cytoplasm</keyword>
<keyword id="KW-0229">DNA integration</keyword>
<keyword id="KW-0233">DNA recombination</keyword>
<keyword id="KW-0238">DNA-binding</keyword>
<comment type="function">
    <text evidence="1">Site-specific tyrosine recombinase, which acts by catalyzing the cutting and rejoining of the recombining DNA molecules. Binds cooperatively to specific DNA consensus sequences that are separated from XerD binding sites by a short central region, forming the heterotetrameric XerC-XerD complex that recombines DNA substrates. The complex is essential to convert dimers of the bacterial chromosome into monomers to permit their segregation at cell division. It also contributes to the segregational stability of plasmids. In the complex XerC specifically exchanges the top DNA strands.</text>
</comment>
<comment type="activity regulation">
    <text evidence="1">FtsK may regulate the catalytic switch between XerC and XerD in the heterotetrameric complex during the two steps of the recombination process.</text>
</comment>
<comment type="subunit">
    <text evidence="1">Forms a cyclic heterotetrameric complex composed of two molecules of XerC and two molecules of XerD, in which XerC interacts with XerD via its C-terminal region, XerD interacts with XerC via its C-terminal region and so on.</text>
</comment>
<comment type="subcellular location">
    <subcellularLocation>
        <location evidence="1">Cytoplasm</location>
    </subcellularLocation>
</comment>
<comment type="similarity">
    <text evidence="1">Belongs to the 'phage' integrase family. XerC subfamily.</text>
</comment>